<protein>
    <recommendedName>
        <fullName evidence="2">Small ribosomal subunit protein uS15c</fullName>
    </recommendedName>
    <alternativeName>
        <fullName>30S ribosomal protein S15, chloroplastic</fullName>
    </alternativeName>
</protein>
<sequence length="88" mass="10719">MIKNIVISFEEQKEESRGSVEFQVFSFTNKIRRLTSHLELHRKDYLSQRGLRKILGKRQRLLAYLSKKNRVRYKELINQLNIRELKTR</sequence>
<geneLocation type="chloroplast"/>
<proteinExistence type="inferred from homology"/>
<organism>
    <name type="scientific">Arabidopsis thaliana</name>
    <name type="common">Mouse-ear cress</name>
    <dbReference type="NCBI Taxonomy" id="3702"/>
    <lineage>
        <taxon>Eukaryota</taxon>
        <taxon>Viridiplantae</taxon>
        <taxon>Streptophyta</taxon>
        <taxon>Embryophyta</taxon>
        <taxon>Tracheophyta</taxon>
        <taxon>Spermatophyta</taxon>
        <taxon>Magnoliopsida</taxon>
        <taxon>eudicotyledons</taxon>
        <taxon>Gunneridae</taxon>
        <taxon>Pentapetalae</taxon>
        <taxon>rosids</taxon>
        <taxon>malvids</taxon>
        <taxon>Brassicales</taxon>
        <taxon>Brassicaceae</taxon>
        <taxon>Camelineae</taxon>
        <taxon>Arabidopsis</taxon>
    </lineage>
</organism>
<gene>
    <name type="primary">rps15</name>
    <name type="ordered locus">AtCg01120</name>
</gene>
<accession>P56805</accession>
<reference key="1">
    <citation type="journal article" date="1999" name="DNA Res.">
        <title>Complete structure of the chloroplast genome of Arabidopsis thaliana.</title>
        <authorList>
            <person name="Sato S."/>
            <person name="Nakamura Y."/>
            <person name="Kaneko T."/>
            <person name="Asamizu E."/>
            <person name="Tabata S."/>
        </authorList>
    </citation>
    <scope>NUCLEOTIDE SEQUENCE [LARGE SCALE GENOMIC DNA]</scope>
    <source>
        <strain>cv. Columbia</strain>
    </source>
</reference>
<reference key="2">
    <citation type="journal article" date="2023" name="Plant Cell">
        <title>An updated nomenclature for plant ribosomal protein genes.</title>
        <authorList>
            <person name="Scarpin M.R."/>
            <person name="Busche M."/>
            <person name="Martinez R.E."/>
            <person name="Harper L.C."/>
            <person name="Reiser L."/>
            <person name="Szakonyi D."/>
            <person name="Merchante C."/>
            <person name="Lan T."/>
            <person name="Xiong W."/>
            <person name="Mo B."/>
            <person name="Tang G."/>
            <person name="Chen X."/>
            <person name="Bailey-Serres J."/>
            <person name="Browning K.S."/>
            <person name="Brunkard J.O."/>
        </authorList>
    </citation>
    <scope>NOMENCLATURE</scope>
</reference>
<dbReference type="EMBL" id="AP000423">
    <property type="protein sequence ID" value="BAA84444.1"/>
    <property type="molecule type" value="Genomic_DNA"/>
</dbReference>
<dbReference type="RefSeq" id="NP_051116.1">
    <property type="nucleotide sequence ID" value="NC_000932.1"/>
</dbReference>
<dbReference type="SMR" id="P56805"/>
<dbReference type="FunCoup" id="P56805">
    <property type="interactions" value="182"/>
</dbReference>
<dbReference type="STRING" id="3702.P56805"/>
<dbReference type="PaxDb" id="3702-ATCG01120.1"/>
<dbReference type="ProteomicsDB" id="228225"/>
<dbReference type="EnsemblPlants" id="ATCG01120.1">
    <property type="protein sequence ID" value="ATCG01120.1"/>
    <property type="gene ID" value="ATCG01120"/>
</dbReference>
<dbReference type="GeneID" id="844799"/>
<dbReference type="Gramene" id="ATCG01120.1">
    <property type="protein sequence ID" value="ATCG01120.1"/>
    <property type="gene ID" value="ATCG01120"/>
</dbReference>
<dbReference type="KEGG" id="ath:ArthCp081"/>
<dbReference type="Araport" id="ATCG01120"/>
<dbReference type="TAIR" id="ATCG01120">
    <property type="gene designation" value="RPS15"/>
</dbReference>
<dbReference type="eggNOG" id="KOG2815">
    <property type="taxonomic scope" value="Eukaryota"/>
</dbReference>
<dbReference type="HOGENOM" id="CLU_148518_1_1_1"/>
<dbReference type="InParanoid" id="P56805"/>
<dbReference type="OMA" id="RINYLTE"/>
<dbReference type="PRO" id="PR:P56805"/>
<dbReference type="Proteomes" id="UP000006548">
    <property type="component" value="Chloroplast Pltd"/>
</dbReference>
<dbReference type="ExpressionAtlas" id="P56805">
    <property type="expression patterns" value="baseline and differential"/>
</dbReference>
<dbReference type="GO" id="GO:0009507">
    <property type="term" value="C:chloroplast"/>
    <property type="evidence" value="ECO:0007005"/>
    <property type="project" value="TAIR"/>
</dbReference>
<dbReference type="GO" id="GO:0009570">
    <property type="term" value="C:chloroplast stroma"/>
    <property type="evidence" value="ECO:0007005"/>
    <property type="project" value="TAIR"/>
</dbReference>
<dbReference type="GO" id="GO:0009536">
    <property type="term" value="C:plastid"/>
    <property type="evidence" value="ECO:0007005"/>
    <property type="project" value="TAIR"/>
</dbReference>
<dbReference type="GO" id="GO:1990904">
    <property type="term" value="C:ribonucleoprotein complex"/>
    <property type="evidence" value="ECO:0007669"/>
    <property type="project" value="UniProtKB-KW"/>
</dbReference>
<dbReference type="GO" id="GO:0005840">
    <property type="term" value="C:ribosome"/>
    <property type="evidence" value="ECO:0007669"/>
    <property type="project" value="UniProtKB-KW"/>
</dbReference>
<dbReference type="GO" id="GO:0003735">
    <property type="term" value="F:structural constituent of ribosome"/>
    <property type="evidence" value="ECO:0007669"/>
    <property type="project" value="InterPro"/>
</dbReference>
<dbReference type="GO" id="GO:0006412">
    <property type="term" value="P:translation"/>
    <property type="evidence" value="ECO:0007669"/>
    <property type="project" value="UniProtKB-UniRule"/>
</dbReference>
<dbReference type="CDD" id="cd00353">
    <property type="entry name" value="Ribosomal_S15p_S13e"/>
    <property type="match status" value="1"/>
</dbReference>
<dbReference type="FunFam" id="1.10.287.10:FF:000011">
    <property type="entry name" value="30S ribosomal protein S15, chloroplastic"/>
    <property type="match status" value="1"/>
</dbReference>
<dbReference type="Gene3D" id="1.10.287.10">
    <property type="entry name" value="S15/NS1, RNA-binding"/>
    <property type="match status" value="1"/>
</dbReference>
<dbReference type="HAMAP" id="MF_01343_B">
    <property type="entry name" value="Ribosomal_uS15_B"/>
    <property type="match status" value="1"/>
</dbReference>
<dbReference type="InterPro" id="IPR000589">
    <property type="entry name" value="Ribosomal_uS15"/>
</dbReference>
<dbReference type="InterPro" id="IPR005290">
    <property type="entry name" value="Ribosomal_uS15_bac-type"/>
</dbReference>
<dbReference type="InterPro" id="IPR009068">
    <property type="entry name" value="uS15_NS1_RNA-bd_sf"/>
</dbReference>
<dbReference type="NCBIfam" id="TIGR00952">
    <property type="entry name" value="S15_bact"/>
    <property type="match status" value="1"/>
</dbReference>
<dbReference type="PANTHER" id="PTHR23321">
    <property type="entry name" value="RIBOSOMAL PROTEIN S15, BACTERIAL AND ORGANELLAR"/>
    <property type="match status" value="1"/>
</dbReference>
<dbReference type="PANTHER" id="PTHR23321:SF26">
    <property type="entry name" value="SMALL RIBOSOMAL SUBUNIT PROTEIN US15M"/>
    <property type="match status" value="1"/>
</dbReference>
<dbReference type="Pfam" id="PF00312">
    <property type="entry name" value="Ribosomal_S15"/>
    <property type="match status" value="1"/>
</dbReference>
<dbReference type="SMART" id="SM01387">
    <property type="entry name" value="Ribosomal_S15"/>
    <property type="match status" value="1"/>
</dbReference>
<dbReference type="SUPFAM" id="SSF47060">
    <property type="entry name" value="S15/NS1 RNA-binding domain"/>
    <property type="match status" value="1"/>
</dbReference>
<dbReference type="PROSITE" id="PS00362">
    <property type="entry name" value="RIBOSOMAL_S15"/>
    <property type="match status" value="1"/>
</dbReference>
<keyword id="KW-0150">Chloroplast</keyword>
<keyword id="KW-0934">Plastid</keyword>
<keyword id="KW-1185">Reference proteome</keyword>
<keyword id="KW-0687">Ribonucleoprotein</keyword>
<keyword id="KW-0689">Ribosomal protein</keyword>
<comment type="subunit">
    <text evidence="1">Part of the 30S ribosomal subunit.</text>
</comment>
<comment type="subcellular location">
    <subcellularLocation>
        <location>Plastid</location>
        <location>Chloroplast</location>
    </subcellularLocation>
</comment>
<comment type="similarity">
    <text evidence="3">Belongs to the universal ribosomal protein uS15 family.</text>
</comment>
<name>RR15_ARATH</name>
<feature type="chain" id="PRO_0000115628" description="Small ribosomal subunit protein uS15c">
    <location>
        <begin position="1"/>
        <end position="88"/>
    </location>
</feature>
<evidence type="ECO:0000250" key="1"/>
<evidence type="ECO:0000303" key="2">
    <source>
    </source>
</evidence>
<evidence type="ECO:0000305" key="3"/>